<evidence type="ECO:0000255" key="1"/>
<evidence type="ECO:0000255" key="2">
    <source>
        <dbReference type="PROSITE-ProRule" id="PRU00557"/>
    </source>
</evidence>
<evidence type="ECO:0000255" key="3">
    <source>
        <dbReference type="PROSITE-ProRule" id="PRU00580"/>
    </source>
</evidence>
<evidence type="ECO:0000256" key="4">
    <source>
        <dbReference type="SAM" id="MobiDB-lite"/>
    </source>
</evidence>
<evidence type="ECO:0000269" key="5">
    <source>
    </source>
</evidence>
<evidence type="ECO:0000303" key="6">
    <source>
    </source>
</evidence>
<evidence type="ECO:0000305" key="7"/>
<evidence type="ECO:0000312" key="8">
    <source>
        <dbReference type="EMBL" id="AAP47155.1"/>
    </source>
</evidence>
<accession>Q7Z1M0</accession>
<sequence>MWYLAFLLIIGAYAADHAWETGNEYHYLIESRTLTVLDKLSQQFSGIVIKGGLTIQVKSPDTLQAVVSKTQYAPVHKTLENWNDEIADLKFDELSMSGKSFEIKLKHGVIRDVLIDQDVLTWEVNLIKSIVSQLQVDLQGENVIASSDNQIPDDSQPFGVYKAMEDSVGGKCEVLYSITPVPENFDSIPFPNLRKDGLNFFVTKTKNYNKCEQQMAYHSGITDKMNWKLGSNDGVLSRSSTSSIIISGNVKHFTIQSSLTTSEIFVRSKLHDTYSSAVYDSVKLTLDRMNQISNPMSASNNLVSTGNLVYIYNNPFSNQRKLRQPSVSLNSMEARSSENSNEENRSDDDRSNFLSNSGEEREYLQSKPTLNEAPESPLLPYFIGYKGESIQKSEDITSVAARFIAQIAWNLETSPVNAFNFSPSTEYIEPCIILIRLIRTMNVEQIAELENKLSDPIYHLQGNKLPTEYKKSYDKTTWDIFFNAVVSAGTGPALISIKNMIKNGQLKDTQAAMIISKIPKTALTPTSEYVNKFFELITDEQVTKQRFLNTSALLAFAELVRYTQSNRSIHYPVHSFGHMVSKQDNALLETYIPYMANQLTEAIKDGDSRRIQTYIMALGNFGHPKVLSVFEPYLEGTLPASTFQRLMMVVSLNRLSENFPRLARSVAFKIYMNIMEAYELRCAAVYVVMKTNPPLVMLQRMAEFTNQDQDRHVNSVIKTNIDALANLEQPEFQDLAAKARIARELLNPHIDTESYSQGFLFKKIIPSLNMAEITILQIIGSQDTTVPKSSYLNIYQSYGGFNLPPSRMSYEISSFRALLDMWYEMPWMIENETQKKLIIEETIEKLGIKGEDPVQFEGNIFVNTLYSSQFSPLDNNTIEETINAFKRIISSWQRSSKNFTSENINYLHYYDMTVAFPTESGLPFIYTLTVPKLLRINIGGGHKGSKTEHFKELTAAGYIMVHEKVQSRIGFVTPFEHRHYVAGIDTNTRLVTPLGLSISVNTTEENKKFKLTLQPSKYIRYGTGHSTVHFSVVPYTARNNILDLEHDFSKQDNDTLPVHTKEPHEIHFYISNWMFVAKSDLIDSKASEKQGMEAIKETVNLFCNSRGAYYRRFDGLMYFGEVRIRASYDFAKLDSDSSEATIPTIVNKEPDSEERKKQFLKEVGKNMNSAYGYVFDMSIDQGFDVQVFTLAYSYSQIDHKSQALFYWNVQSVDDPKIYAELGAIGYVKSKSISLNPEKALEQIPNDEFKAEIRLGNNFNEEMIKLEGNWTRTDDVKDMAMKSEIVKKCRQDMKQGNILLPACQKANKLINQKDLLMMSIDTTSDILYASANRGILWIQSLISENYVETMNLRSSSKNTIDMEIKMLPDNDDAKISLRTSQADVSFSLKDIIGNDSNVSMKDTFKEQLDDESVCVLDKTHAVTFDGKVYPLKLGKCWHVMMTIYPKRDPNNFEKTLSIPSDMRAIVMAQEMDDGSKQIKMILGDQEVHLQKSGDCLEASVDGETANFSDHKSHQEKDFEIYGSNETITVFSPTYEITVEYDGEHILLMISDNYLNAVRGLCGNYDTQPNNDFIIPENCILTKAEEFAATYAMTQESCQGPAPENKRKAEQSTCMSRSYRPSDVISDREAGRSSTKNRGWGYH</sequence>
<keyword id="KW-1015">Disulfide bond</keyword>
<keyword id="KW-0325">Glycoprotein</keyword>
<keyword id="KW-0964">Secreted</keyword>
<keyword id="KW-0732">Signal</keyword>
<keyword id="KW-0758">Storage protein</keyword>
<comment type="function">
    <text evidence="7">Precursor of the egg-yolk proteins that are sources of nutrients during embryonic development.</text>
</comment>
<comment type="subcellular location">
    <subcellularLocation>
        <location evidence="5">Secreted</location>
    </subcellularLocation>
</comment>
<comment type="tissue specificity">
    <text evidence="5">Hemolymph.</text>
</comment>
<comment type="developmental stage">
    <text evidence="5">Abundantly present in reproductive females but is present to a lesser degree in other female caste members (alate, virgin queens; and workers). Not expressed in males.</text>
</comment>
<proteinExistence type="evidence at transcript level"/>
<organism>
    <name type="scientific">Solenopsis invicta</name>
    <name type="common">Red imported fire ant</name>
    <name type="synonym">Solenopsis wagneri</name>
    <dbReference type="NCBI Taxonomy" id="13686"/>
    <lineage>
        <taxon>Eukaryota</taxon>
        <taxon>Metazoa</taxon>
        <taxon>Ecdysozoa</taxon>
        <taxon>Arthropoda</taxon>
        <taxon>Hexapoda</taxon>
        <taxon>Insecta</taxon>
        <taxon>Pterygota</taxon>
        <taxon>Neoptera</taxon>
        <taxon>Endopterygota</taxon>
        <taxon>Hymenoptera</taxon>
        <taxon>Apocrita</taxon>
        <taxon>Aculeata</taxon>
        <taxon>Formicoidea</taxon>
        <taxon>Formicidae</taxon>
        <taxon>Myrmicinae</taxon>
        <taxon>Solenopsis</taxon>
    </lineage>
</organism>
<feature type="signal peptide" evidence="1">
    <location>
        <begin position="1"/>
        <end position="18"/>
    </location>
</feature>
<feature type="chain" id="PRO_0000378059" description="Vitellogenin-1" evidence="1">
    <location>
        <begin position="19"/>
        <end position="1641"/>
    </location>
</feature>
<feature type="domain" description="Vitellogenin" evidence="2">
    <location>
        <begin position="19"/>
        <end position="790"/>
    </location>
</feature>
<feature type="domain" description="VWFD" evidence="3">
    <location>
        <begin position="1410"/>
        <end position="1597"/>
    </location>
</feature>
<feature type="region of interest" description="Disordered" evidence="4">
    <location>
        <begin position="322"/>
        <end position="372"/>
    </location>
</feature>
<feature type="region of interest" description="Disordered" evidence="4">
    <location>
        <begin position="1594"/>
        <end position="1641"/>
    </location>
</feature>
<feature type="compositionally biased region" description="Polar residues" evidence="4">
    <location>
        <begin position="322"/>
        <end position="334"/>
    </location>
</feature>
<feature type="compositionally biased region" description="Basic and acidic residues" evidence="4">
    <location>
        <begin position="342"/>
        <end position="351"/>
    </location>
</feature>
<feature type="glycosylation site" description="N-linked (GlcNAc...) asparagine" evidence="1">
    <location>
        <position position="344"/>
    </location>
</feature>
<feature type="glycosylation site" description="N-linked (GlcNAc...) asparagine" evidence="1">
    <location>
        <position position="549"/>
    </location>
</feature>
<feature type="glycosylation site" description="N-linked (GlcNAc...) asparagine" evidence="1">
    <location>
        <position position="566"/>
    </location>
</feature>
<feature type="glycosylation site" description="N-linked (GlcNAc...) asparagine" evidence="1">
    <location>
        <position position="831"/>
    </location>
</feature>
<feature type="glycosylation site" description="N-linked (GlcNAc...) asparagine" evidence="1">
    <location>
        <position position="875"/>
    </location>
</feature>
<feature type="glycosylation site" description="N-linked (GlcNAc...) asparagine" evidence="1">
    <location>
        <position position="898"/>
    </location>
</feature>
<feature type="glycosylation site" description="N-linked (GlcNAc...) asparagine" evidence="1">
    <location>
        <position position="1001"/>
    </location>
</feature>
<feature type="glycosylation site" description="N-linked (GlcNAc...) asparagine" evidence="1">
    <location>
        <position position="1053"/>
    </location>
</feature>
<feature type="glycosylation site" description="N-linked (GlcNAc...) asparagine" evidence="1">
    <location>
        <position position="1268"/>
    </location>
</feature>
<feature type="glycosylation site" description="N-linked (GlcNAc...) asparagine" evidence="1">
    <location>
        <position position="1393"/>
    </location>
</feature>
<feature type="glycosylation site" description="N-linked (GlcNAc...) asparagine" evidence="1">
    <location>
        <position position="1396"/>
    </location>
</feature>
<feature type="glycosylation site" description="N-linked (GlcNAc...) asparagine" evidence="1">
    <location>
        <position position="1505"/>
    </location>
</feature>
<feature type="glycosylation site" description="N-linked (GlcNAc...) asparagine" evidence="1">
    <location>
        <position position="1523"/>
    </location>
</feature>
<feature type="disulfide bond" evidence="2 3">
    <location>
        <begin position="172"/>
        <end position="211"/>
    </location>
</feature>
<feature type="disulfide bond" evidence="3">
    <location>
        <begin position="1435"/>
        <end position="1596"/>
    </location>
</feature>
<protein>
    <recommendedName>
        <fullName evidence="6">Vitellogenin-1</fullName>
    </recommendedName>
    <alternativeName>
        <fullName evidence="8">Vitellogenin</fullName>
        <shortName evidence="6">VG</shortName>
    </alternativeName>
</protein>
<reference evidence="8" key="1">
    <citation type="submission" date="2002-05" db="EMBL/GenBank/DDBJ databases">
        <title>Cloning and characterization of the vitellogenin cDNA from the imported fire ant Solenopsis invicta (Formicidae: Apocrita).</title>
        <authorList>
            <person name="Lewis D.K."/>
            <person name="Chen M.-E."/>
            <person name="Vinson S.B."/>
            <person name="Keeley L.L."/>
        </authorList>
    </citation>
    <scope>NUCLEOTIDE SEQUENCE [MRNA]</scope>
    <source>
        <tissue evidence="8">Fat body</tissue>
    </source>
</reference>
<reference evidence="7" key="2">
    <citation type="journal article" date="2001" name="J. Insect Physiol.">
        <title>Characterization of vitellogenin in the red imported fire ant, Solenopsis invicta (Hymenoptera: Apocrita: Formicidae).</title>
        <authorList>
            <person name="Lewis D.K."/>
            <person name="Campbell J.Q."/>
            <person name="Sowa S.M."/>
            <person name="Chen M.-E."/>
            <person name="Vinson S.B."/>
            <person name="Keeley L.L."/>
        </authorList>
    </citation>
    <scope>SUBCELLULAR LOCATION</scope>
    <scope>TISSUE SPECIFICITY</scope>
    <scope>DEVELOPMENTAL STAGE</scope>
</reference>
<dbReference type="EMBL" id="AF512520">
    <property type="protein sequence ID" value="AAP47155.1"/>
    <property type="molecule type" value="mRNA"/>
</dbReference>
<dbReference type="SMR" id="Q7Z1M0"/>
<dbReference type="GO" id="GO:0005576">
    <property type="term" value="C:extracellular region"/>
    <property type="evidence" value="ECO:0000314"/>
    <property type="project" value="UniProtKB"/>
</dbReference>
<dbReference type="GO" id="GO:0005319">
    <property type="term" value="F:lipid transporter activity"/>
    <property type="evidence" value="ECO:0007669"/>
    <property type="project" value="InterPro"/>
</dbReference>
<dbReference type="GO" id="GO:0045735">
    <property type="term" value="F:nutrient reservoir activity"/>
    <property type="evidence" value="ECO:0007669"/>
    <property type="project" value="UniProtKB-KW"/>
</dbReference>
<dbReference type="FunFam" id="1.25.10.20:FF:000003">
    <property type="entry name" value="Vitellogenin C"/>
    <property type="match status" value="1"/>
</dbReference>
<dbReference type="FunFam" id="2.30.230.10:FF:000008">
    <property type="entry name" value="Vitellogenin-like Protein"/>
    <property type="match status" value="1"/>
</dbReference>
<dbReference type="Gene3D" id="2.30.230.10">
    <property type="entry name" value="Lipovitellin, beta-sheet shell regions, chain A"/>
    <property type="match status" value="1"/>
</dbReference>
<dbReference type="Gene3D" id="2.20.80.10">
    <property type="entry name" value="Lipovitellin-phosvitin complex, chain A, domain 4"/>
    <property type="match status" value="1"/>
</dbReference>
<dbReference type="Gene3D" id="1.25.10.20">
    <property type="entry name" value="Vitellinogen, superhelical"/>
    <property type="match status" value="1"/>
</dbReference>
<dbReference type="InterPro" id="IPR015819">
    <property type="entry name" value="Lipid_transp_b-sht_shell"/>
</dbReference>
<dbReference type="InterPro" id="IPR011030">
    <property type="entry name" value="Lipovitellin_superhlx_dom"/>
</dbReference>
<dbReference type="InterPro" id="IPR015816">
    <property type="entry name" value="Vitellinogen_b-sht_N"/>
</dbReference>
<dbReference type="InterPro" id="IPR015255">
    <property type="entry name" value="Vitellinogen_open_b-sht"/>
</dbReference>
<dbReference type="InterPro" id="IPR050733">
    <property type="entry name" value="Vitellogenin/Apolipophorin"/>
</dbReference>
<dbReference type="InterPro" id="IPR001747">
    <property type="entry name" value="Vitellogenin_N"/>
</dbReference>
<dbReference type="InterPro" id="IPR001846">
    <property type="entry name" value="VWF_type-D"/>
</dbReference>
<dbReference type="PANTHER" id="PTHR23345:SF15">
    <property type="entry name" value="VITELLOGENIN 1-RELATED"/>
    <property type="match status" value="1"/>
</dbReference>
<dbReference type="PANTHER" id="PTHR23345">
    <property type="entry name" value="VITELLOGENIN-RELATED"/>
    <property type="match status" value="1"/>
</dbReference>
<dbReference type="Pfam" id="PF09172">
    <property type="entry name" value="Vit_open_b-sht"/>
    <property type="match status" value="1"/>
</dbReference>
<dbReference type="Pfam" id="PF01347">
    <property type="entry name" value="Vitellogenin_N"/>
    <property type="match status" value="1"/>
</dbReference>
<dbReference type="Pfam" id="PF00094">
    <property type="entry name" value="VWD"/>
    <property type="match status" value="1"/>
</dbReference>
<dbReference type="SMART" id="SM01169">
    <property type="entry name" value="DUF1943"/>
    <property type="match status" value="1"/>
</dbReference>
<dbReference type="SMART" id="SM00638">
    <property type="entry name" value="LPD_N"/>
    <property type="match status" value="1"/>
</dbReference>
<dbReference type="SMART" id="SM00216">
    <property type="entry name" value="VWD"/>
    <property type="match status" value="1"/>
</dbReference>
<dbReference type="SUPFAM" id="SSF56968">
    <property type="entry name" value="Lipovitellin-phosvitin complex, beta-sheet shell regions"/>
    <property type="match status" value="2"/>
</dbReference>
<dbReference type="SUPFAM" id="SSF48431">
    <property type="entry name" value="Lipovitellin-phosvitin complex, superhelical domain"/>
    <property type="match status" value="1"/>
</dbReference>
<dbReference type="PROSITE" id="PS51211">
    <property type="entry name" value="VITELLOGENIN"/>
    <property type="match status" value="1"/>
</dbReference>
<dbReference type="PROSITE" id="PS51233">
    <property type="entry name" value="VWFD"/>
    <property type="match status" value="1"/>
</dbReference>
<name>VIT1_SOLIN</name>